<feature type="chain" id="PRO_0000211946" description="Ribosomal RNA small subunit methyltransferase I">
    <location>
        <begin position="1"/>
        <end position="285"/>
    </location>
</feature>
<keyword id="KW-0963">Cytoplasm</keyword>
<keyword id="KW-0489">Methyltransferase</keyword>
<keyword id="KW-1185">Reference proteome</keyword>
<keyword id="KW-0698">rRNA processing</keyword>
<keyword id="KW-0949">S-adenosyl-L-methionine</keyword>
<keyword id="KW-0808">Transferase</keyword>
<protein>
    <recommendedName>
        <fullName evidence="1">Ribosomal RNA small subunit methyltransferase I</fullName>
        <ecNumber evidence="1">2.1.1.198</ecNumber>
    </recommendedName>
    <alternativeName>
        <fullName evidence="1">16S rRNA 2'-O-ribose C1402 methyltransferase</fullName>
    </alternativeName>
    <alternativeName>
        <fullName evidence="1">rRNA (cytidine-2'-O-)-methyltransferase RsmI</fullName>
    </alternativeName>
</protein>
<proteinExistence type="evidence at protein level"/>
<organism>
    <name type="scientific">Mycobacterium tuberculosis (strain ATCC 25618 / H37Rv)</name>
    <dbReference type="NCBI Taxonomy" id="83332"/>
    <lineage>
        <taxon>Bacteria</taxon>
        <taxon>Bacillati</taxon>
        <taxon>Actinomycetota</taxon>
        <taxon>Actinomycetes</taxon>
        <taxon>Mycobacteriales</taxon>
        <taxon>Mycobacteriaceae</taxon>
        <taxon>Mycobacterium</taxon>
        <taxon>Mycobacterium tuberculosis complex</taxon>
    </lineage>
</organism>
<sequence>MSSGRLLLGATPLGQPSDASPRLAAALATADVVAAEDTRRVRKLAKALDIRIGGRVVSLFDRVEALRVTALLDAINNGATVLVVSDAGTPVISDPGYRLVAACIDAGVSVTCLPGPSAVTTALVMSGLPAEKFCFEGFAPRKGAARRAWLAELAEERRTCVFFESPRRLAACLNDAVEQLGGARPAAICRELTKVHEEVVRGSLDELAIWAAGGVLGEITVVVAGAAPHAELSSLIAQVEEFVAAGIRVKDACSEVAAAHPGVRTRQLYDAVLQSRRETGGPAQP</sequence>
<dbReference type="EC" id="2.1.1.198" evidence="1"/>
<dbReference type="EMBL" id="AL123456">
    <property type="protein sequence ID" value="CCP43753.1"/>
    <property type="molecule type" value="Genomic_DNA"/>
</dbReference>
<dbReference type="PIR" id="F70602">
    <property type="entry name" value="F70602"/>
</dbReference>
<dbReference type="RefSeq" id="NP_215519.1">
    <property type="nucleotide sequence ID" value="NC_000962.3"/>
</dbReference>
<dbReference type="RefSeq" id="WP_003405173.1">
    <property type="nucleotide sequence ID" value="NZ_NVQJ01000018.1"/>
</dbReference>
<dbReference type="SMR" id="P9WGW7"/>
<dbReference type="FunCoup" id="P9WGW7">
    <property type="interactions" value="97"/>
</dbReference>
<dbReference type="STRING" id="83332.Rv1003"/>
<dbReference type="PaxDb" id="83332-Rv1003"/>
<dbReference type="DNASU" id="887935"/>
<dbReference type="GeneID" id="45424975"/>
<dbReference type="GeneID" id="887935"/>
<dbReference type="KEGG" id="mtu:Rv1003"/>
<dbReference type="KEGG" id="mtv:RVBD_1003"/>
<dbReference type="TubercuList" id="Rv1003"/>
<dbReference type="eggNOG" id="COG0313">
    <property type="taxonomic scope" value="Bacteria"/>
</dbReference>
<dbReference type="InParanoid" id="P9WGW7"/>
<dbReference type="OrthoDB" id="9809084at2"/>
<dbReference type="PhylomeDB" id="P9WGW7"/>
<dbReference type="Proteomes" id="UP000001584">
    <property type="component" value="Chromosome"/>
</dbReference>
<dbReference type="GO" id="GO:0005737">
    <property type="term" value="C:cytoplasm"/>
    <property type="evidence" value="ECO:0007669"/>
    <property type="project" value="UniProtKB-SubCell"/>
</dbReference>
<dbReference type="GO" id="GO:0005886">
    <property type="term" value="C:plasma membrane"/>
    <property type="evidence" value="ECO:0007005"/>
    <property type="project" value="MTBBASE"/>
</dbReference>
<dbReference type="GO" id="GO:0070677">
    <property type="term" value="F:rRNA (cytosine-2'-O-)-methyltransferase activity"/>
    <property type="evidence" value="ECO:0007669"/>
    <property type="project" value="UniProtKB-UniRule"/>
</dbReference>
<dbReference type="CDD" id="cd11648">
    <property type="entry name" value="RsmI"/>
    <property type="match status" value="1"/>
</dbReference>
<dbReference type="FunFam" id="3.30.950.10:FF:000002">
    <property type="entry name" value="Ribosomal RNA small subunit methyltransferase I"/>
    <property type="match status" value="1"/>
</dbReference>
<dbReference type="FunFam" id="3.40.1010.10:FF:000007">
    <property type="entry name" value="Ribosomal RNA small subunit methyltransferase I"/>
    <property type="match status" value="1"/>
</dbReference>
<dbReference type="Gene3D" id="3.40.1010.10">
    <property type="entry name" value="Cobalt-precorrin-4 Transmethylase, Domain 1"/>
    <property type="match status" value="1"/>
</dbReference>
<dbReference type="Gene3D" id="3.30.950.10">
    <property type="entry name" value="Methyltransferase, Cobalt-precorrin-4 Transmethylase, Domain 2"/>
    <property type="match status" value="1"/>
</dbReference>
<dbReference type="HAMAP" id="MF_01877">
    <property type="entry name" value="16SrRNA_methyltr_I"/>
    <property type="match status" value="1"/>
</dbReference>
<dbReference type="InterPro" id="IPR000878">
    <property type="entry name" value="4pyrrol_Mease"/>
</dbReference>
<dbReference type="InterPro" id="IPR035996">
    <property type="entry name" value="4pyrrol_Methylase_sf"/>
</dbReference>
<dbReference type="InterPro" id="IPR014777">
    <property type="entry name" value="4pyrrole_Mease_sub1"/>
</dbReference>
<dbReference type="InterPro" id="IPR014776">
    <property type="entry name" value="4pyrrole_Mease_sub2"/>
</dbReference>
<dbReference type="InterPro" id="IPR008189">
    <property type="entry name" value="rRNA_ssu_MeTfrase_I"/>
</dbReference>
<dbReference type="InterPro" id="IPR018063">
    <property type="entry name" value="SAM_MeTrfase_RsmI_CS"/>
</dbReference>
<dbReference type="NCBIfam" id="TIGR00096">
    <property type="entry name" value="16S rRNA (cytidine(1402)-2'-O)-methyltransferase"/>
    <property type="match status" value="1"/>
</dbReference>
<dbReference type="PANTHER" id="PTHR46111">
    <property type="entry name" value="RIBOSOMAL RNA SMALL SUBUNIT METHYLTRANSFERASE I"/>
    <property type="match status" value="1"/>
</dbReference>
<dbReference type="PANTHER" id="PTHR46111:SF1">
    <property type="entry name" value="RIBOSOMAL RNA SMALL SUBUNIT METHYLTRANSFERASE I"/>
    <property type="match status" value="1"/>
</dbReference>
<dbReference type="Pfam" id="PF00590">
    <property type="entry name" value="TP_methylase"/>
    <property type="match status" value="1"/>
</dbReference>
<dbReference type="PIRSF" id="PIRSF005917">
    <property type="entry name" value="MTase_YraL"/>
    <property type="match status" value="1"/>
</dbReference>
<dbReference type="SUPFAM" id="SSF53790">
    <property type="entry name" value="Tetrapyrrole methylase"/>
    <property type="match status" value="1"/>
</dbReference>
<dbReference type="PROSITE" id="PS01296">
    <property type="entry name" value="RSMI"/>
    <property type="match status" value="1"/>
</dbReference>
<accession>P9WGW7</accession>
<accession>L0T856</accession>
<accession>O05588</accession>
<accession>P0A640</accession>
<gene>
    <name evidence="1" type="primary">rsmI</name>
    <name type="ordered locus">Rv1003</name>
    <name type="ORF">MTCI237.19</name>
</gene>
<name>RSMI_MYCTU</name>
<evidence type="ECO:0000255" key="1">
    <source>
        <dbReference type="HAMAP-Rule" id="MF_01877"/>
    </source>
</evidence>
<evidence type="ECO:0000269" key="2">
    <source>
    </source>
</evidence>
<comment type="function">
    <text evidence="1">Catalyzes the 2'-O-methylation of the ribose of cytidine 1402 (C1402) in 16S rRNA.</text>
</comment>
<comment type="catalytic activity">
    <reaction evidence="1">
        <text>cytidine(1402) in 16S rRNA + S-adenosyl-L-methionine = 2'-O-methylcytidine(1402) in 16S rRNA + S-adenosyl-L-homocysteine + H(+)</text>
        <dbReference type="Rhea" id="RHEA:42924"/>
        <dbReference type="Rhea" id="RHEA-COMP:10285"/>
        <dbReference type="Rhea" id="RHEA-COMP:10286"/>
        <dbReference type="ChEBI" id="CHEBI:15378"/>
        <dbReference type="ChEBI" id="CHEBI:57856"/>
        <dbReference type="ChEBI" id="CHEBI:59789"/>
        <dbReference type="ChEBI" id="CHEBI:74495"/>
        <dbReference type="ChEBI" id="CHEBI:82748"/>
        <dbReference type="EC" id="2.1.1.198"/>
    </reaction>
</comment>
<comment type="subcellular location">
    <subcellularLocation>
        <location evidence="1">Cytoplasm</location>
    </subcellularLocation>
</comment>
<comment type="induction">
    <text evidence="2">Up-regulated 34-fold 7 days after infection of human macrophages.</text>
</comment>
<comment type="similarity">
    <text evidence="1">Belongs to the methyltransferase superfamily. RsmI family.</text>
</comment>
<reference key="1">
    <citation type="journal article" date="1998" name="Nature">
        <title>Deciphering the biology of Mycobacterium tuberculosis from the complete genome sequence.</title>
        <authorList>
            <person name="Cole S.T."/>
            <person name="Brosch R."/>
            <person name="Parkhill J."/>
            <person name="Garnier T."/>
            <person name="Churcher C.M."/>
            <person name="Harris D.E."/>
            <person name="Gordon S.V."/>
            <person name="Eiglmeier K."/>
            <person name="Gas S."/>
            <person name="Barry C.E. III"/>
            <person name="Tekaia F."/>
            <person name="Badcock K."/>
            <person name="Basham D."/>
            <person name="Brown D."/>
            <person name="Chillingworth T."/>
            <person name="Connor R."/>
            <person name="Davies R.M."/>
            <person name="Devlin K."/>
            <person name="Feltwell T."/>
            <person name="Gentles S."/>
            <person name="Hamlin N."/>
            <person name="Holroyd S."/>
            <person name="Hornsby T."/>
            <person name="Jagels K."/>
            <person name="Krogh A."/>
            <person name="McLean J."/>
            <person name="Moule S."/>
            <person name="Murphy L.D."/>
            <person name="Oliver S."/>
            <person name="Osborne J."/>
            <person name="Quail M.A."/>
            <person name="Rajandream M.A."/>
            <person name="Rogers J."/>
            <person name="Rutter S."/>
            <person name="Seeger K."/>
            <person name="Skelton S."/>
            <person name="Squares S."/>
            <person name="Squares R."/>
            <person name="Sulston J.E."/>
            <person name="Taylor K."/>
            <person name="Whitehead S."/>
            <person name="Barrell B.G."/>
        </authorList>
    </citation>
    <scope>NUCLEOTIDE SEQUENCE [LARGE SCALE GENOMIC DNA]</scope>
    <source>
        <strain>ATCC 25618 / H37Rv</strain>
    </source>
</reference>
<reference key="2">
    <citation type="journal article" date="2006" name="Res. Microbiol.">
        <title>Profiling of Mycobacterium tuberculosis gene expression during human macrophage infection: upregulation of the alternative sigma factor G, a group of transcriptional regulators, and proteins with unknown function.</title>
        <authorList>
            <person name="Cappelli G."/>
            <person name="Volpe E."/>
            <person name="Grassi M."/>
            <person name="Liseo B."/>
            <person name="Colizzi V."/>
            <person name="Mariani F."/>
        </authorList>
    </citation>
    <scope>INDUCTION IN HUMAN MACROPHAGES</scope>
    <source>
        <strain>ATCC 25618 / H37Rv</strain>
    </source>
</reference>
<reference key="3">
    <citation type="journal article" date="2011" name="Mol. Cell. Proteomics">
        <title>Proteogenomic analysis of Mycobacterium tuberculosis by high resolution mass spectrometry.</title>
        <authorList>
            <person name="Kelkar D.S."/>
            <person name="Kumar D."/>
            <person name="Kumar P."/>
            <person name="Balakrishnan L."/>
            <person name="Muthusamy B."/>
            <person name="Yadav A.K."/>
            <person name="Shrivastava P."/>
            <person name="Marimuthu A."/>
            <person name="Anand S."/>
            <person name="Sundaram H."/>
            <person name="Kingsbury R."/>
            <person name="Harsha H.C."/>
            <person name="Nair B."/>
            <person name="Prasad T.S."/>
            <person name="Chauhan D.S."/>
            <person name="Katoch K."/>
            <person name="Katoch V.M."/>
            <person name="Kumar P."/>
            <person name="Chaerkady R."/>
            <person name="Ramachandran S."/>
            <person name="Dash D."/>
            <person name="Pandey A."/>
        </authorList>
    </citation>
    <scope>IDENTIFICATION BY MASS SPECTROMETRY [LARGE SCALE ANALYSIS]</scope>
    <source>
        <strain>ATCC 25618 / H37Rv</strain>
    </source>
</reference>